<gene>
    <name evidence="1" type="primary">metK</name>
    <name type="ordered locus">SCH_3030</name>
</gene>
<comment type="function">
    <text evidence="1">Catalyzes the formation of S-adenosylmethionine (AdoMet) from methionine and ATP. The overall synthetic reaction is composed of two sequential steps, AdoMet formation and the subsequent tripolyphosphate hydrolysis which occurs prior to release of AdoMet from the enzyme.</text>
</comment>
<comment type="catalytic activity">
    <reaction evidence="1">
        <text>L-methionine + ATP + H2O = S-adenosyl-L-methionine + phosphate + diphosphate</text>
        <dbReference type="Rhea" id="RHEA:21080"/>
        <dbReference type="ChEBI" id="CHEBI:15377"/>
        <dbReference type="ChEBI" id="CHEBI:30616"/>
        <dbReference type="ChEBI" id="CHEBI:33019"/>
        <dbReference type="ChEBI" id="CHEBI:43474"/>
        <dbReference type="ChEBI" id="CHEBI:57844"/>
        <dbReference type="ChEBI" id="CHEBI:59789"/>
        <dbReference type="EC" id="2.5.1.6"/>
    </reaction>
</comment>
<comment type="cofactor">
    <cofactor evidence="1">
        <name>Mg(2+)</name>
        <dbReference type="ChEBI" id="CHEBI:18420"/>
    </cofactor>
    <text evidence="1">Binds 2 divalent ions per subunit.</text>
</comment>
<comment type="cofactor">
    <cofactor evidence="1">
        <name>K(+)</name>
        <dbReference type="ChEBI" id="CHEBI:29103"/>
    </cofactor>
    <text evidence="1">Binds 1 potassium ion per subunit.</text>
</comment>
<comment type="pathway">
    <text evidence="1">Amino-acid biosynthesis; S-adenosyl-L-methionine biosynthesis; S-adenosyl-L-methionine from L-methionine: step 1/1.</text>
</comment>
<comment type="subunit">
    <text evidence="1">Homotetramer; dimer of dimers.</text>
</comment>
<comment type="subcellular location">
    <subcellularLocation>
        <location evidence="1">Cytoplasm</location>
    </subcellularLocation>
</comment>
<comment type="similarity">
    <text evidence="1">Belongs to the AdoMet synthase family.</text>
</comment>
<dbReference type="EC" id="2.5.1.6" evidence="1"/>
<dbReference type="EMBL" id="AE017220">
    <property type="protein sequence ID" value="AAX66936.1"/>
    <property type="molecule type" value="Genomic_DNA"/>
</dbReference>
<dbReference type="RefSeq" id="WP_001062140.1">
    <property type="nucleotide sequence ID" value="NC_006905.1"/>
</dbReference>
<dbReference type="SMR" id="Q57K26"/>
<dbReference type="KEGG" id="sec:SCH_3030"/>
<dbReference type="HOGENOM" id="CLU_041802_1_1_6"/>
<dbReference type="UniPathway" id="UPA00315">
    <property type="reaction ID" value="UER00080"/>
</dbReference>
<dbReference type="Proteomes" id="UP000000538">
    <property type="component" value="Chromosome"/>
</dbReference>
<dbReference type="GO" id="GO:0005737">
    <property type="term" value="C:cytoplasm"/>
    <property type="evidence" value="ECO:0007669"/>
    <property type="project" value="UniProtKB-SubCell"/>
</dbReference>
<dbReference type="GO" id="GO:0005524">
    <property type="term" value="F:ATP binding"/>
    <property type="evidence" value="ECO:0007669"/>
    <property type="project" value="UniProtKB-UniRule"/>
</dbReference>
<dbReference type="GO" id="GO:0000287">
    <property type="term" value="F:magnesium ion binding"/>
    <property type="evidence" value="ECO:0007669"/>
    <property type="project" value="UniProtKB-UniRule"/>
</dbReference>
<dbReference type="GO" id="GO:0004478">
    <property type="term" value="F:methionine adenosyltransferase activity"/>
    <property type="evidence" value="ECO:0007669"/>
    <property type="project" value="UniProtKB-UniRule"/>
</dbReference>
<dbReference type="GO" id="GO:0006730">
    <property type="term" value="P:one-carbon metabolic process"/>
    <property type="evidence" value="ECO:0007669"/>
    <property type="project" value="UniProtKB-KW"/>
</dbReference>
<dbReference type="GO" id="GO:0006556">
    <property type="term" value="P:S-adenosylmethionine biosynthetic process"/>
    <property type="evidence" value="ECO:0007669"/>
    <property type="project" value="UniProtKB-UniRule"/>
</dbReference>
<dbReference type="CDD" id="cd18079">
    <property type="entry name" value="S-AdoMet_synt"/>
    <property type="match status" value="1"/>
</dbReference>
<dbReference type="FunFam" id="3.30.300.10:FF:000001">
    <property type="entry name" value="S-adenosylmethionine synthase"/>
    <property type="match status" value="1"/>
</dbReference>
<dbReference type="FunFam" id="3.30.300.10:FF:000003">
    <property type="entry name" value="S-adenosylmethionine synthase"/>
    <property type="match status" value="1"/>
</dbReference>
<dbReference type="Gene3D" id="3.30.300.10">
    <property type="match status" value="3"/>
</dbReference>
<dbReference type="HAMAP" id="MF_00086">
    <property type="entry name" value="S_AdoMet_synth1"/>
    <property type="match status" value="1"/>
</dbReference>
<dbReference type="InterPro" id="IPR022631">
    <property type="entry name" value="ADOMET_SYNTHASE_CS"/>
</dbReference>
<dbReference type="InterPro" id="IPR022630">
    <property type="entry name" value="S-AdoMet_synt_C"/>
</dbReference>
<dbReference type="InterPro" id="IPR022629">
    <property type="entry name" value="S-AdoMet_synt_central"/>
</dbReference>
<dbReference type="InterPro" id="IPR022628">
    <property type="entry name" value="S-AdoMet_synt_N"/>
</dbReference>
<dbReference type="InterPro" id="IPR002133">
    <property type="entry name" value="S-AdoMet_synthetase"/>
</dbReference>
<dbReference type="InterPro" id="IPR022636">
    <property type="entry name" value="S-AdoMet_synthetase_sfam"/>
</dbReference>
<dbReference type="NCBIfam" id="TIGR01034">
    <property type="entry name" value="metK"/>
    <property type="match status" value="1"/>
</dbReference>
<dbReference type="PANTHER" id="PTHR11964">
    <property type="entry name" value="S-ADENOSYLMETHIONINE SYNTHETASE"/>
    <property type="match status" value="1"/>
</dbReference>
<dbReference type="Pfam" id="PF02773">
    <property type="entry name" value="S-AdoMet_synt_C"/>
    <property type="match status" value="1"/>
</dbReference>
<dbReference type="Pfam" id="PF02772">
    <property type="entry name" value="S-AdoMet_synt_M"/>
    <property type="match status" value="1"/>
</dbReference>
<dbReference type="Pfam" id="PF00438">
    <property type="entry name" value="S-AdoMet_synt_N"/>
    <property type="match status" value="1"/>
</dbReference>
<dbReference type="PIRSF" id="PIRSF000497">
    <property type="entry name" value="MAT"/>
    <property type="match status" value="1"/>
</dbReference>
<dbReference type="SUPFAM" id="SSF55973">
    <property type="entry name" value="S-adenosylmethionine synthetase"/>
    <property type="match status" value="3"/>
</dbReference>
<dbReference type="PROSITE" id="PS00376">
    <property type="entry name" value="ADOMET_SYNTHASE_1"/>
    <property type="match status" value="1"/>
</dbReference>
<dbReference type="PROSITE" id="PS00377">
    <property type="entry name" value="ADOMET_SYNTHASE_2"/>
    <property type="match status" value="1"/>
</dbReference>
<reference key="1">
    <citation type="journal article" date="2005" name="Nucleic Acids Res.">
        <title>The genome sequence of Salmonella enterica serovar Choleraesuis, a highly invasive and resistant zoonotic pathogen.</title>
        <authorList>
            <person name="Chiu C.-H."/>
            <person name="Tang P."/>
            <person name="Chu C."/>
            <person name="Hu S."/>
            <person name="Bao Q."/>
            <person name="Yu J."/>
            <person name="Chou Y.-Y."/>
            <person name="Wang H.-S."/>
            <person name="Lee Y.-S."/>
        </authorList>
    </citation>
    <scope>NUCLEOTIDE SEQUENCE [LARGE SCALE GENOMIC DNA]</scope>
    <source>
        <strain>SC-B67</strain>
    </source>
</reference>
<name>METK_SALCH</name>
<sequence>MAKHLFTSESVSEGHPDKIADQISDAVLDAILQQDPKARVACETYVKTGMVLVGGEITTSAWVDIEEITRNTVREIGYVHSDMGFDANSCAVLSAIGKQSPDINQGVDRADPLEQGAGDQGLMFGYATNETDVLMPAPITYAHRLVQRQAEVRKNGTLPWLRPDAKSQVTFQYDDGKIVGIDAVVLSTQHAEDIDQKSLQEAVMEEIIKPILPSEWLNTSTKFFINPTGRFVIGGPMGDCGLTGRKIIVDTYGGMARHGGGAFSGKDPSKVDRSAAYAARYVAKNIVAAGLADRCEIQVSYAIGVAEPTSIMVETFGTEKVPAEQLILLVREFFDLRPYGLIQMLDLLHPIYKETAAYGHFGRENFPWEKTDKAQLLRDAAGLK</sequence>
<evidence type="ECO:0000255" key="1">
    <source>
        <dbReference type="HAMAP-Rule" id="MF_00086"/>
    </source>
</evidence>
<feature type="chain" id="PRO_0000241034" description="S-adenosylmethionine synthase">
    <location>
        <begin position="1"/>
        <end position="384"/>
    </location>
</feature>
<feature type="region of interest" description="Flexible loop" evidence="1">
    <location>
        <begin position="99"/>
        <end position="109"/>
    </location>
</feature>
<feature type="binding site" description="in other chain" evidence="1">
    <location>
        <position position="15"/>
    </location>
    <ligand>
        <name>ATP</name>
        <dbReference type="ChEBI" id="CHEBI:30616"/>
        <note>ligand shared between two neighboring subunits</note>
    </ligand>
</feature>
<feature type="binding site" evidence="1">
    <location>
        <position position="17"/>
    </location>
    <ligand>
        <name>Mg(2+)</name>
        <dbReference type="ChEBI" id="CHEBI:18420"/>
    </ligand>
</feature>
<feature type="binding site" evidence="1">
    <location>
        <position position="43"/>
    </location>
    <ligand>
        <name>K(+)</name>
        <dbReference type="ChEBI" id="CHEBI:29103"/>
    </ligand>
</feature>
<feature type="binding site" description="in other chain" evidence="1">
    <location>
        <position position="56"/>
    </location>
    <ligand>
        <name>L-methionine</name>
        <dbReference type="ChEBI" id="CHEBI:57844"/>
        <note>ligand shared between two neighboring subunits</note>
    </ligand>
</feature>
<feature type="binding site" description="in other chain" evidence="1">
    <location>
        <position position="99"/>
    </location>
    <ligand>
        <name>L-methionine</name>
        <dbReference type="ChEBI" id="CHEBI:57844"/>
        <note>ligand shared between two neighboring subunits</note>
    </ligand>
</feature>
<feature type="binding site" description="in other chain" evidence="1">
    <location>
        <begin position="164"/>
        <end position="166"/>
    </location>
    <ligand>
        <name>ATP</name>
        <dbReference type="ChEBI" id="CHEBI:30616"/>
        <note>ligand shared between two neighboring subunits</note>
    </ligand>
</feature>
<feature type="binding site" description="in other chain" evidence="1">
    <location>
        <begin position="230"/>
        <end position="231"/>
    </location>
    <ligand>
        <name>ATP</name>
        <dbReference type="ChEBI" id="CHEBI:30616"/>
        <note>ligand shared between two neighboring subunits</note>
    </ligand>
</feature>
<feature type="binding site" evidence="1">
    <location>
        <position position="239"/>
    </location>
    <ligand>
        <name>ATP</name>
        <dbReference type="ChEBI" id="CHEBI:30616"/>
        <note>ligand shared between two neighboring subunits</note>
    </ligand>
</feature>
<feature type="binding site" evidence="1">
    <location>
        <position position="239"/>
    </location>
    <ligand>
        <name>L-methionine</name>
        <dbReference type="ChEBI" id="CHEBI:57844"/>
        <note>ligand shared between two neighboring subunits</note>
    </ligand>
</feature>
<feature type="binding site" description="in other chain" evidence="1">
    <location>
        <begin position="245"/>
        <end position="246"/>
    </location>
    <ligand>
        <name>ATP</name>
        <dbReference type="ChEBI" id="CHEBI:30616"/>
        <note>ligand shared between two neighboring subunits</note>
    </ligand>
</feature>
<feature type="binding site" evidence="1">
    <location>
        <position position="262"/>
    </location>
    <ligand>
        <name>ATP</name>
        <dbReference type="ChEBI" id="CHEBI:30616"/>
        <note>ligand shared between two neighboring subunits</note>
    </ligand>
</feature>
<feature type="binding site" evidence="1">
    <location>
        <position position="266"/>
    </location>
    <ligand>
        <name>ATP</name>
        <dbReference type="ChEBI" id="CHEBI:30616"/>
        <note>ligand shared between two neighboring subunits</note>
    </ligand>
</feature>
<feature type="binding site" description="in other chain" evidence="1">
    <location>
        <position position="270"/>
    </location>
    <ligand>
        <name>L-methionine</name>
        <dbReference type="ChEBI" id="CHEBI:57844"/>
        <note>ligand shared between two neighboring subunits</note>
    </ligand>
</feature>
<proteinExistence type="inferred from homology"/>
<protein>
    <recommendedName>
        <fullName evidence="1">S-adenosylmethionine synthase</fullName>
        <shortName evidence="1">AdoMet synthase</shortName>
        <ecNumber evidence="1">2.5.1.6</ecNumber>
    </recommendedName>
    <alternativeName>
        <fullName evidence="1">MAT</fullName>
    </alternativeName>
    <alternativeName>
        <fullName evidence="1">Methionine adenosyltransferase</fullName>
    </alternativeName>
</protein>
<keyword id="KW-0067">ATP-binding</keyword>
<keyword id="KW-0963">Cytoplasm</keyword>
<keyword id="KW-0460">Magnesium</keyword>
<keyword id="KW-0479">Metal-binding</keyword>
<keyword id="KW-0547">Nucleotide-binding</keyword>
<keyword id="KW-0554">One-carbon metabolism</keyword>
<keyword id="KW-0630">Potassium</keyword>
<keyword id="KW-0808">Transferase</keyword>
<organism>
    <name type="scientific">Salmonella choleraesuis (strain SC-B67)</name>
    <dbReference type="NCBI Taxonomy" id="321314"/>
    <lineage>
        <taxon>Bacteria</taxon>
        <taxon>Pseudomonadati</taxon>
        <taxon>Pseudomonadota</taxon>
        <taxon>Gammaproteobacteria</taxon>
        <taxon>Enterobacterales</taxon>
        <taxon>Enterobacteriaceae</taxon>
        <taxon>Salmonella</taxon>
    </lineage>
</organism>
<accession>Q57K26</accession>